<gene>
    <name evidence="1" type="primary">flgH</name>
    <name type="ordered locus">XOO2576</name>
</gene>
<keyword id="KW-0975">Bacterial flagellum</keyword>
<keyword id="KW-0998">Cell outer membrane</keyword>
<keyword id="KW-0449">Lipoprotein</keyword>
<keyword id="KW-0472">Membrane</keyword>
<keyword id="KW-0564">Palmitate</keyword>
<keyword id="KW-1185">Reference proteome</keyword>
<keyword id="KW-0732">Signal</keyword>
<protein>
    <recommendedName>
        <fullName evidence="1">Flagellar L-ring protein</fullName>
    </recommendedName>
    <alternativeName>
        <fullName evidence="1">Basal body L-ring protein</fullName>
    </alternativeName>
</protein>
<name>FLGH_XANOR</name>
<sequence>MSRPPLLSSACLAATCSLLLGGCVAAGDVRPYAAMAPIVPVVAPTVQPTAGAIYAAGPGLNLYGDRRARDVGDLLTITLIESTTASSSANTSTSKKDATTMASPTLLGAPLTVAGLDVLQNTLKGDRAFDGKGNTAQSNRMQGSVTVTVIQRLPNGNLVVQGQKNLRLNQGDELVQVQGIVRDADIAPDNTIPSSKVAEARIAYGGRGAIAQSNAMGWLSRFFNSRLSPY</sequence>
<feature type="signal peptide" evidence="1">
    <location>
        <begin position="1"/>
        <end position="15"/>
    </location>
</feature>
<feature type="chain" id="PRO_0000009486" description="Flagellar L-ring protein">
    <location>
        <begin position="16"/>
        <end position="230"/>
    </location>
</feature>
<feature type="lipid moiety-binding region" description="N-palmitoyl cysteine" evidence="1">
    <location>
        <position position="16"/>
    </location>
</feature>
<feature type="lipid moiety-binding region" description="S-diacylglycerol cysteine" evidence="1">
    <location>
        <position position="16"/>
    </location>
</feature>
<accession>Q5GZP1</accession>
<evidence type="ECO:0000255" key="1">
    <source>
        <dbReference type="HAMAP-Rule" id="MF_00415"/>
    </source>
</evidence>
<dbReference type="EMBL" id="AE013598">
    <property type="protein sequence ID" value="AAW75830.1"/>
    <property type="molecule type" value="Genomic_DNA"/>
</dbReference>
<dbReference type="SMR" id="Q5GZP1"/>
<dbReference type="STRING" id="291331.XOO2576"/>
<dbReference type="KEGG" id="xoo:XOO2576"/>
<dbReference type="HOGENOM" id="CLU_069313_0_1_6"/>
<dbReference type="Proteomes" id="UP000006735">
    <property type="component" value="Chromosome"/>
</dbReference>
<dbReference type="GO" id="GO:0009427">
    <property type="term" value="C:bacterial-type flagellum basal body, distal rod, L ring"/>
    <property type="evidence" value="ECO:0007669"/>
    <property type="project" value="InterPro"/>
</dbReference>
<dbReference type="GO" id="GO:0009279">
    <property type="term" value="C:cell outer membrane"/>
    <property type="evidence" value="ECO:0007669"/>
    <property type="project" value="UniProtKB-SubCell"/>
</dbReference>
<dbReference type="GO" id="GO:0003774">
    <property type="term" value="F:cytoskeletal motor activity"/>
    <property type="evidence" value="ECO:0007669"/>
    <property type="project" value="InterPro"/>
</dbReference>
<dbReference type="GO" id="GO:0071973">
    <property type="term" value="P:bacterial-type flagellum-dependent cell motility"/>
    <property type="evidence" value="ECO:0007669"/>
    <property type="project" value="InterPro"/>
</dbReference>
<dbReference type="HAMAP" id="MF_00415">
    <property type="entry name" value="FlgH"/>
    <property type="match status" value="1"/>
</dbReference>
<dbReference type="InterPro" id="IPR000527">
    <property type="entry name" value="Flag_Lring"/>
</dbReference>
<dbReference type="NCBIfam" id="NF001304">
    <property type="entry name" value="PRK00249.1-4"/>
    <property type="match status" value="1"/>
</dbReference>
<dbReference type="PANTHER" id="PTHR34933">
    <property type="entry name" value="FLAGELLAR L-RING PROTEIN"/>
    <property type="match status" value="1"/>
</dbReference>
<dbReference type="PANTHER" id="PTHR34933:SF1">
    <property type="entry name" value="FLAGELLAR L-RING PROTEIN"/>
    <property type="match status" value="1"/>
</dbReference>
<dbReference type="Pfam" id="PF02107">
    <property type="entry name" value="FlgH"/>
    <property type="match status" value="1"/>
</dbReference>
<dbReference type="PRINTS" id="PR01008">
    <property type="entry name" value="FLGLRINGFLGH"/>
</dbReference>
<dbReference type="PROSITE" id="PS51257">
    <property type="entry name" value="PROKAR_LIPOPROTEIN"/>
    <property type="match status" value="1"/>
</dbReference>
<proteinExistence type="inferred from homology"/>
<organism>
    <name type="scientific">Xanthomonas oryzae pv. oryzae (strain KACC10331 / KXO85)</name>
    <dbReference type="NCBI Taxonomy" id="291331"/>
    <lineage>
        <taxon>Bacteria</taxon>
        <taxon>Pseudomonadati</taxon>
        <taxon>Pseudomonadota</taxon>
        <taxon>Gammaproteobacteria</taxon>
        <taxon>Lysobacterales</taxon>
        <taxon>Lysobacteraceae</taxon>
        <taxon>Xanthomonas</taxon>
    </lineage>
</organism>
<comment type="function">
    <text evidence="1">Assembles around the rod to form the L-ring and probably protects the motor/basal body from shearing forces during rotation.</text>
</comment>
<comment type="subunit">
    <text evidence="1">The basal body constitutes a major portion of the flagellar organelle and consists of four rings (L,P,S, and M) mounted on a central rod.</text>
</comment>
<comment type="subcellular location">
    <subcellularLocation>
        <location evidence="1">Cell outer membrane</location>
        <topology evidence="1">Lipid-anchor</topology>
    </subcellularLocation>
    <subcellularLocation>
        <location evidence="1">Bacterial flagellum basal body</location>
    </subcellularLocation>
</comment>
<comment type="similarity">
    <text evidence="1">Belongs to the FlgH family.</text>
</comment>
<reference key="1">
    <citation type="journal article" date="2005" name="Nucleic Acids Res.">
        <title>The genome sequence of Xanthomonas oryzae pathovar oryzae KACC10331, the bacterial blight pathogen of rice.</title>
        <authorList>
            <person name="Lee B.-M."/>
            <person name="Park Y.-J."/>
            <person name="Park D.-S."/>
            <person name="Kang H.-W."/>
            <person name="Kim J.-G."/>
            <person name="Song E.-S."/>
            <person name="Park I.-C."/>
            <person name="Yoon U.-H."/>
            <person name="Hahn J.-H."/>
            <person name="Koo B.-S."/>
            <person name="Lee G.-B."/>
            <person name="Kim H."/>
            <person name="Park H.-S."/>
            <person name="Yoon K.-O."/>
            <person name="Kim J.-H."/>
            <person name="Jung C.-H."/>
            <person name="Koh N.-H."/>
            <person name="Seo J.-S."/>
            <person name="Go S.-J."/>
        </authorList>
    </citation>
    <scope>NUCLEOTIDE SEQUENCE [LARGE SCALE GENOMIC DNA]</scope>
    <source>
        <strain>KACC10331 / KXO85</strain>
    </source>
</reference>